<proteinExistence type="inferred from homology"/>
<organism>
    <name type="scientific">Paraburkholderia phytofirmans (strain DSM 17436 / LMG 22146 / PsJN)</name>
    <name type="common">Burkholderia phytofirmans</name>
    <dbReference type="NCBI Taxonomy" id="398527"/>
    <lineage>
        <taxon>Bacteria</taxon>
        <taxon>Pseudomonadati</taxon>
        <taxon>Pseudomonadota</taxon>
        <taxon>Betaproteobacteria</taxon>
        <taxon>Burkholderiales</taxon>
        <taxon>Burkholderiaceae</taxon>
        <taxon>Paraburkholderia</taxon>
    </lineage>
</organism>
<keyword id="KW-0028">Amino-acid biosynthesis</keyword>
<keyword id="KW-0055">Arginine biosynthesis</keyword>
<keyword id="KW-0963">Cytoplasm</keyword>
<keyword id="KW-0456">Lyase</keyword>
<gene>
    <name evidence="1" type="primary">argH</name>
    <name type="ordered locus">Bphyt_1065</name>
</gene>
<comment type="catalytic activity">
    <reaction evidence="1">
        <text>2-(N(omega)-L-arginino)succinate = fumarate + L-arginine</text>
        <dbReference type="Rhea" id="RHEA:24020"/>
        <dbReference type="ChEBI" id="CHEBI:29806"/>
        <dbReference type="ChEBI" id="CHEBI:32682"/>
        <dbReference type="ChEBI" id="CHEBI:57472"/>
        <dbReference type="EC" id="4.3.2.1"/>
    </reaction>
</comment>
<comment type="pathway">
    <text evidence="1">Amino-acid biosynthesis; L-arginine biosynthesis; L-arginine from L-ornithine and carbamoyl phosphate: step 3/3.</text>
</comment>
<comment type="subcellular location">
    <subcellularLocation>
        <location evidence="1">Cytoplasm</location>
    </subcellularLocation>
</comment>
<comment type="similarity">
    <text evidence="1">Belongs to the lyase 1 family. Argininosuccinate lyase subfamily.</text>
</comment>
<evidence type="ECO:0000255" key="1">
    <source>
        <dbReference type="HAMAP-Rule" id="MF_00006"/>
    </source>
</evidence>
<name>ARLY_PARPJ</name>
<dbReference type="EC" id="4.3.2.1" evidence="1"/>
<dbReference type="EMBL" id="CP001052">
    <property type="protein sequence ID" value="ACD15484.1"/>
    <property type="molecule type" value="Genomic_DNA"/>
</dbReference>
<dbReference type="RefSeq" id="WP_012432112.1">
    <property type="nucleotide sequence ID" value="NC_010681.1"/>
</dbReference>
<dbReference type="SMR" id="B2T1C7"/>
<dbReference type="STRING" id="398527.Bphyt_1065"/>
<dbReference type="GeneID" id="97306371"/>
<dbReference type="KEGG" id="bpy:Bphyt_1065"/>
<dbReference type="eggNOG" id="COG0165">
    <property type="taxonomic scope" value="Bacteria"/>
</dbReference>
<dbReference type="HOGENOM" id="CLU_027272_2_3_4"/>
<dbReference type="OrthoDB" id="9769623at2"/>
<dbReference type="UniPathway" id="UPA00068">
    <property type="reaction ID" value="UER00114"/>
</dbReference>
<dbReference type="Proteomes" id="UP000001739">
    <property type="component" value="Chromosome 1"/>
</dbReference>
<dbReference type="GO" id="GO:0005829">
    <property type="term" value="C:cytosol"/>
    <property type="evidence" value="ECO:0007669"/>
    <property type="project" value="TreeGrafter"/>
</dbReference>
<dbReference type="GO" id="GO:0004056">
    <property type="term" value="F:argininosuccinate lyase activity"/>
    <property type="evidence" value="ECO:0007669"/>
    <property type="project" value="UniProtKB-UniRule"/>
</dbReference>
<dbReference type="GO" id="GO:0042450">
    <property type="term" value="P:arginine biosynthetic process via ornithine"/>
    <property type="evidence" value="ECO:0007669"/>
    <property type="project" value="InterPro"/>
</dbReference>
<dbReference type="GO" id="GO:0006526">
    <property type="term" value="P:L-arginine biosynthetic process"/>
    <property type="evidence" value="ECO:0007669"/>
    <property type="project" value="UniProtKB-UniRule"/>
</dbReference>
<dbReference type="CDD" id="cd01359">
    <property type="entry name" value="Argininosuccinate_lyase"/>
    <property type="match status" value="1"/>
</dbReference>
<dbReference type="FunFam" id="1.10.275.10:FF:000002">
    <property type="entry name" value="Argininosuccinate lyase"/>
    <property type="match status" value="1"/>
</dbReference>
<dbReference type="FunFam" id="1.10.40.30:FF:000001">
    <property type="entry name" value="Argininosuccinate lyase"/>
    <property type="match status" value="1"/>
</dbReference>
<dbReference type="FunFam" id="1.20.200.10:FF:000015">
    <property type="entry name" value="argininosuccinate lyase isoform X2"/>
    <property type="match status" value="1"/>
</dbReference>
<dbReference type="Gene3D" id="1.10.40.30">
    <property type="entry name" value="Fumarase/aspartase (C-terminal domain)"/>
    <property type="match status" value="1"/>
</dbReference>
<dbReference type="Gene3D" id="1.20.200.10">
    <property type="entry name" value="Fumarase/aspartase (Central domain)"/>
    <property type="match status" value="1"/>
</dbReference>
<dbReference type="Gene3D" id="1.10.275.10">
    <property type="entry name" value="Fumarase/aspartase (N-terminal domain)"/>
    <property type="match status" value="1"/>
</dbReference>
<dbReference type="HAMAP" id="MF_00006">
    <property type="entry name" value="Arg_succ_lyase"/>
    <property type="match status" value="1"/>
</dbReference>
<dbReference type="InterPro" id="IPR029419">
    <property type="entry name" value="Arg_succ_lyase_C"/>
</dbReference>
<dbReference type="InterPro" id="IPR009049">
    <property type="entry name" value="Argininosuccinate_lyase"/>
</dbReference>
<dbReference type="InterPro" id="IPR024083">
    <property type="entry name" value="Fumarase/histidase_N"/>
</dbReference>
<dbReference type="InterPro" id="IPR020557">
    <property type="entry name" value="Fumarate_lyase_CS"/>
</dbReference>
<dbReference type="InterPro" id="IPR000362">
    <property type="entry name" value="Fumarate_lyase_fam"/>
</dbReference>
<dbReference type="InterPro" id="IPR022761">
    <property type="entry name" value="Fumarate_lyase_N"/>
</dbReference>
<dbReference type="InterPro" id="IPR008948">
    <property type="entry name" value="L-Aspartase-like"/>
</dbReference>
<dbReference type="NCBIfam" id="TIGR00838">
    <property type="entry name" value="argH"/>
    <property type="match status" value="1"/>
</dbReference>
<dbReference type="PANTHER" id="PTHR43814">
    <property type="entry name" value="ARGININOSUCCINATE LYASE"/>
    <property type="match status" value="1"/>
</dbReference>
<dbReference type="PANTHER" id="PTHR43814:SF1">
    <property type="entry name" value="ARGININOSUCCINATE LYASE"/>
    <property type="match status" value="1"/>
</dbReference>
<dbReference type="Pfam" id="PF14698">
    <property type="entry name" value="ASL_C2"/>
    <property type="match status" value="1"/>
</dbReference>
<dbReference type="Pfam" id="PF00206">
    <property type="entry name" value="Lyase_1"/>
    <property type="match status" value="1"/>
</dbReference>
<dbReference type="PRINTS" id="PR00145">
    <property type="entry name" value="ARGSUCLYASE"/>
</dbReference>
<dbReference type="PRINTS" id="PR00149">
    <property type="entry name" value="FUMRATELYASE"/>
</dbReference>
<dbReference type="SUPFAM" id="SSF48557">
    <property type="entry name" value="L-aspartase-like"/>
    <property type="match status" value="1"/>
</dbReference>
<dbReference type="PROSITE" id="PS00163">
    <property type="entry name" value="FUMARATE_LYASES"/>
    <property type="match status" value="1"/>
</dbReference>
<accession>B2T1C7</accession>
<sequence>MTSQLHKKGEAWSARFSEPMSELVKRYTSSVFFDKRLALVDIEGSLAHASMLAAQKIIAADDLAAIQRGMAQIKGEIERGEFEWQLDLEDVHLNIEARLTALIGDAGKRLHTGRSRNDQVATDIRLWLRGEIDRIGGLLTELRTALLDMAEKNASTIMPGFTHLQVAQPVTFGHHLLAYVEMFSRDAERMIDCRKRVNRLPLGAAALAGTSYPIDRHAVAKTLGFDGICANSLDAVSDRDFAIEFTAASALVMTHVSRFSEELVLWMSPRVGFIDLADRFCTGSSIMPQKKNPDVPELARGKTGRVNGHLIALLTLMKGQPLAYNKDNQEDKEPLFDTVDTVADTLRIFAEMVAGISVKPQAMRDAALQGFSTATDLADYLVKRGLPFRDAHEAVALAVRVCADRGCDLADLTLEEMRKELPNVAHLIGEDVFSYLTLEGSVASRNHPGGTAPEQVLAAVKAARAALK</sequence>
<feature type="chain" id="PRO_1000089072" description="Argininosuccinate lyase">
    <location>
        <begin position="1"/>
        <end position="468"/>
    </location>
</feature>
<reference key="1">
    <citation type="journal article" date="2011" name="J. Bacteriol.">
        <title>Complete genome sequence of the plant growth-promoting endophyte Burkholderia phytofirmans strain PsJN.</title>
        <authorList>
            <person name="Weilharter A."/>
            <person name="Mitter B."/>
            <person name="Shin M.V."/>
            <person name="Chain P.S."/>
            <person name="Nowak J."/>
            <person name="Sessitsch A."/>
        </authorList>
    </citation>
    <scope>NUCLEOTIDE SEQUENCE [LARGE SCALE GENOMIC DNA]</scope>
    <source>
        <strain>DSM 17436 / LMG 22146 / PsJN</strain>
    </source>
</reference>
<protein>
    <recommendedName>
        <fullName evidence="1">Argininosuccinate lyase</fullName>
        <shortName evidence="1">ASAL</shortName>
        <ecNumber evidence="1">4.3.2.1</ecNumber>
    </recommendedName>
    <alternativeName>
        <fullName evidence="1">Arginosuccinase</fullName>
    </alternativeName>
</protein>